<evidence type="ECO:0000255" key="1">
    <source>
        <dbReference type="HAMAP-Rule" id="MF_00013"/>
    </source>
</evidence>
<evidence type="ECO:0000255" key="2">
    <source>
        <dbReference type="PROSITE-ProRule" id="PRU01067"/>
    </source>
</evidence>
<reference key="1">
    <citation type="journal article" date="2007" name="ISME J.">
        <title>Population level functional diversity in a microbial community revealed by comparative genomic and metagenomic analyses.</title>
        <authorList>
            <person name="Bhaya D."/>
            <person name="Grossman A.R."/>
            <person name="Steunou A.-S."/>
            <person name="Khuri N."/>
            <person name="Cohan F.M."/>
            <person name="Hamamura N."/>
            <person name="Melendrez M.C."/>
            <person name="Bateson M.M."/>
            <person name="Ward D.M."/>
            <person name="Heidelberg J.F."/>
        </authorList>
    </citation>
    <scope>NUCLEOTIDE SEQUENCE [LARGE SCALE GENOMIC DNA]</scope>
    <source>
        <strain>JA-3-3Ab</strain>
    </source>
</reference>
<proteinExistence type="inferred from homology"/>
<accession>Q2JTV2</accession>
<name>LIPB_SYNJA</name>
<dbReference type="EC" id="2.3.1.181" evidence="1"/>
<dbReference type="EMBL" id="CP000239">
    <property type="protein sequence ID" value="ABC99881.1"/>
    <property type="molecule type" value="Genomic_DNA"/>
</dbReference>
<dbReference type="RefSeq" id="WP_011430557.1">
    <property type="nucleotide sequence ID" value="NC_007775.1"/>
</dbReference>
<dbReference type="SMR" id="Q2JTV2"/>
<dbReference type="STRING" id="321327.CYA_1727"/>
<dbReference type="KEGG" id="cya:CYA_1727"/>
<dbReference type="eggNOG" id="COG0321">
    <property type="taxonomic scope" value="Bacteria"/>
</dbReference>
<dbReference type="HOGENOM" id="CLU_035168_1_0_3"/>
<dbReference type="OrthoDB" id="9787061at2"/>
<dbReference type="UniPathway" id="UPA00538">
    <property type="reaction ID" value="UER00592"/>
</dbReference>
<dbReference type="Proteomes" id="UP000008818">
    <property type="component" value="Chromosome"/>
</dbReference>
<dbReference type="GO" id="GO:0005737">
    <property type="term" value="C:cytoplasm"/>
    <property type="evidence" value="ECO:0007669"/>
    <property type="project" value="UniProtKB-SubCell"/>
</dbReference>
<dbReference type="GO" id="GO:0033819">
    <property type="term" value="F:lipoyl(octanoyl) transferase activity"/>
    <property type="evidence" value="ECO:0007669"/>
    <property type="project" value="UniProtKB-EC"/>
</dbReference>
<dbReference type="GO" id="GO:0036211">
    <property type="term" value="P:protein modification process"/>
    <property type="evidence" value="ECO:0007669"/>
    <property type="project" value="InterPro"/>
</dbReference>
<dbReference type="CDD" id="cd16444">
    <property type="entry name" value="LipB"/>
    <property type="match status" value="1"/>
</dbReference>
<dbReference type="Gene3D" id="3.30.930.10">
    <property type="entry name" value="Bira Bifunctional Protein, Domain 2"/>
    <property type="match status" value="1"/>
</dbReference>
<dbReference type="HAMAP" id="MF_00013">
    <property type="entry name" value="LipB"/>
    <property type="match status" value="1"/>
</dbReference>
<dbReference type="InterPro" id="IPR045864">
    <property type="entry name" value="aa-tRNA-synth_II/BPL/LPL"/>
</dbReference>
<dbReference type="InterPro" id="IPR004143">
    <property type="entry name" value="BPL_LPL_catalytic"/>
</dbReference>
<dbReference type="InterPro" id="IPR000544">
    <property type="entry name" value="Octanoyltransferase"/>
</dbReference>
<dbReference type="InterPro" id="IPR020605">
    <property type="entry name" value="Octanoyltransferase_CS"/>
</dbReference>
<dbReference type="NCBIfam" id="TIGR00214">
    <property type="entry name" value="lipB"/>
    <property type="match status" value="1"/>
</dbReference>
<dbReference type="NCBIfam" id="NF010925">
    <property type="entry name" value="PRK14345.1"/>
    <property type="match status" value="1"/>
</dbReference>
<dbReference type="PANTHER" id="PTHR10993:SF7">
    <property type="entry name" value="LIPOYLTRANSFERASE 2, MITOCHONDRIAL-RELATED"/>
    <property type="match status" value="1"/>
</dbReference>
<dbReference type="PANTHER" id="PTHR10993">
    <property type="entry name" value="OCTANOYLTRANSFERASE"/>
    <property type="match status" value="1"/>
</dbReference>
<dbReference type="Pfam" id="PF21948">
    <property type="entry name" value="LplA-B_cat"/>
    <property type="match status" value="1"/>
</dbReference>
<dbReference type="PIRSF" id="PIRSF016262">
    <property type="entry name" value="LPLase"/>
    <property type="match status" value="1"/>
</dbReference>
<dbReference type="SUPFAM" id="SSF55681">
    <property type="entry name" value="Class II aaRS and biotin synthetases"/>
    <property type="match status" value="1"/>
</dbReference>
<dbReference type="PROSITE" id="PS51733">
    <property type="entry name" value="BPL_LPL_CATALYTIC"/>
    <property type="match status" value="1"/>
</dbReference>
<dbReference type="PROSITE" id="PS01313">
    <property type="entry name" value="LIPB"/>
    <property type="match status" value="1"/>
</dbReference>
<feature type="chain" id="PRO_0000242774" description="Octanoyltransferase">
    <location>
        <begin position="1"/>
        <end position="260"/>
    </location>
</feature>
<feature type="domain" description="BPL/LPL catalytic" evidence="2">
    <location>
        <begin position="42"/>
        <end position="241"/>
    </location>
</feature>
<feature type="active site" description="Acyl-thioester intermediate" evidence="1">
    <location>
        <position position="203"/>
    </location>
</feature>
<feature type="binding site" evidence="1">
    <location>
        <begin position="97"/>
        <end position="104"/>
    </location>
    <ligand>
        <name>substrate</name>
    </ligand>
</feature>
<feature type="binding site" evidence="1">
    <location>
        <begin position="172"/>
        <end position="174"/>
    </location>
    <ligand>
        <name>substrate</name>
    </ligand>
</feature>
<feature type="binding site" evidence="1">
    <location>
        <begin position="185"/>
        <end position="187"/>
    </location>
    <ligand>
        <name>substrate</name>
    </ligand>
</feature>
<feature type="site" description="Lowers pKa of active site Cys" evidence="1">
    <location>
        <position position="169"/>
    </location>
</feature>
<organism>
    <name type="scientific">Synechococcus sp. (strain JA-3-3Ab)</name>
    <name type="common">Cyanobacteria bacterium Yellowstone A-Prime</name>
    <dbReference type="NCBI Taxonomy" id="321327"/>
    <lineage>
        <taxon>Bacteria</taxon>
        <taxon>Bacillati</taxon>
        <taxon>Cyanobacteriota</taxon>
        <taxon>Cyanophyceae</taxon>
        <taxon>Synechococcales</taxon>
        <taxon>Synechococcaceae</taxon>
        <taxon>Synechococcus</taxon>
    </lineage>
</organism>
<protein>
    <recommendedName>
        <fullName evidence="1">Octanoyltransferase</fullName>
        <ecNumber evidence="1">2.3.1.181</ecNumber>
    </recommendedName>
    <alternativeName>
        <fullName evidence="1">Lipoate-protein ligase B</fullName>
    </alternativeName>
    <alternativeName>
        <fullName evidence="1">Lipoyl/octanoyl transferase</fullName>
    </alternativeName>
    <alternativeName>
        <fullName evidence="1">Octanoyl-[acyl-carrier-protein]-protein N-octanoyltransferase</fullName>
    </alternativeName>
</protein>
<comment type="function">
    <text evidence="1">Catalyzes the transfer of endogenously produced octanoic acid from octanoyl-acyl-carrier-protein onto the lipoyl domains of lipoate-dependent enzymes. Lipoyl-ACP can also act as a substrate although octanoyl-ACP is likely to be the physiological substrate.</text>
</comment>
<comment type="catalytic activity">
    <reaction evidence="1">
        <text>octanoyl-[ACP] + L-lysyl-[protein] = N(6)-octanoyl-L-lysyl-[protein] + holo-[ACP] + H(+)</text>
        <dbReference type="Rhea" id="RHEA:17665"/>
        <dbReference type="Rhea" id="RHEA-COMP:9636"/>
        <dbReference type="Rhea" id="RHEA-COMP:9685"/>
        <dbReference type="Rhea" id="RHEA-COMP:9752"/>
        <dbReference type="Rhea" id="RHEA-COMP:9928"/>
        <dbReference type="ChEBI" id="CHEBI:15378"/>
        <dbReference type="ChEBI" id="CHEBI:29969"/>
        <dbReference type="ChEBI" id="CHEBI:64479"/>
        <dbReference type="ChEBI" id="CHEBI:78463"/>
        <dbReference type="ChEBI" id="CHEBI:78809"/>
        <dbReference type="EC" id="2.3.1.181"/>
    </reaction>
</comment>
<comment type="pathway">
    <text evidence="1">Protein modification; protein lipoylation via endogenous pathway; protein N(6)-(lipoyl)lysine from octanoyl-[acyl-carrier-protein]: step 1/2.</text>
</comment>
<comment type="subcellular location">
    <subcellularLocation>
        <location evidence="1">Cytoplasm</location>
    </subcellularLocation>
</comment>
<comment type="miscellaneous">
    <text evidence="1">In the reaction, the free carboxyl group of octanoic acid is attached via an amide linkage to the epsilon-amino group of a specific lysine residue of lipoyl domains of lipoate-dependent enzymes.</text>
</comment>
<comment type="similarity">
    <text evidence="1">Belongs to the LipB family.</text>
</comment>
<gene>
    <name evidence="1" type="primary">lipB</name>
    <name type="ordered locus">CYA_1727</name>
</gene>
<keyword id="KW-0012">Acyltransferase</keyword>
<keyword id="KW-0963">Cytoplasm</keyword>
<keyword id="KW-0808">Transferase</keyword>
<sequence>MRAFWQELEAGPVLQVHQAGEVPYRRAWAWQQVRLAQMIRDPQVPDGLLLLTHPPVYTLGAGADPKFLKSLAGQIGSPDTQPESPVTEGPEILRVERGGEVTYHGPGQWVGYALLNLKRHRTVYGSHGQPDLHRYLRHLEEVLIQTVAHFGLQGERIPGLTGVWVQGHKVAAIGIKVSRWVTYHGFALNVCPDLAAFQAIVPCGIPDRPVGSLVHFCPEVTMAAVAPVLVKSFCQVFGLQAQEVSLSEWLGERKSLKTQG</sequence>